<evidence type="ECO:0000255" key="1">
    <source>
        <dbReference type="HAMAP-Rule" id="MF_01368"/>
    </source>
</evidence>
<evidence type="ECO:0000305" key="2"/>
<protein>
    <recommendedName>
        <fullName evidence="1">Large ribosomal subunit protein bL17</fullName>
    </recommendedName>
    <alternativeName>
        <fullName evidence="2">50S ribosomal protein L17</fullName>
    </alternativeName>
</protein>
<accession>A9NEG1</accession>
<gene>
    <name evidence="1" type="primary">rplQ</name>
    <name type="ordered locus">ACL_0115</name>
</gene>
<sequence>MAIPSRLRRTTDQREALLRDLVTDLIINDRITTTEAKAKSVQRVADKMVTLAKKGTLAARRQAAETVRLEDAGEGKDALQKLFSVIAPRYNDRTGGYTRIIKTVPRRGDAAPMAIIEFI</sequence>
<feature type="chain" id="PRO_1000144357" description="Large ribosomal subunit protein bL17">
    <location>
        <begin position="1"/>
        <end position="119"/>
    </location>
</feature>
<keyword id="KW-1185">Reference proteome</keyword>
<keyword id="KW-0687">Ribonucleoprotein</keyword>
<keyword id="KW-0689">Ribosomal protein</keyword>
<comment type="subunit">
    <text evidence="1">Part of the 50S ribosomal subunit. Contacts protein L32.</text>
</comment>
<comment type="similarity">
    <text evidence="1">Belongs to the bacterial ribosomal protein bL17 family.</text>
</comment>
<organism>
    <name type="scientific">Acholeplasma laidlawii (strain PG-8A)</name>
    <dbReference type="NCBI Taxonomy" id="441768"/>
    <lineage>
        <taxon>Bacteria</taxon>
        <taxon>Bacillati</taxon>
        <taxon>Mycoplasmatota</taxon>
        <taxon>Mollicutes</taxon>
        <taxon>Acholeplasmatales</taxon>
        <taxon>Acholeplasmataceae</taxon>
        <taxon>Acholeplasma</taxon>
    </lineage>
</organism>
<reference key="1">
    <citation type="journal article" date="2011" name="J. Bacteriol.">
        <title>Complete genome and proteome of Acholeplasma laidlawii.</title>
        <authorList>
            <person name="Lazarev V.N."/>
            <person name="Levitskii S.A."/>
            <person name="Basovskii Y.I."/>
            <person name="Chukin M.M."/>
            <person name="Akopian T.A."/>
            <person name="Vereshchagin V.V."/>
            <person name="Kostrjukova E.S."/>
            <person name="Kovaleva G.Y."/>
            <person name="Kazanov M.D."/>
            <person name="Malko D.B."/>
            <person name="Vitreschak A.G."/>
            <person name="Sernova N.V."/>
            <person name="Gelfand M.S."/>
            <person name="Demina I.A."/>
            <person name="Serebryakova M.V."/>
            <person name="Galyamina M.A."/>
            <person name="Vtyurin N.N."/>
            <person name="Rogov S.I."/>
            <person name="Alexeev D.G."/>
            <person name="Ladygina V.G."/>
            <person name="Govorun V.M."/>
        </authorList>
    </citation>
    <scope>NUCLEOTIDE SEQUENCE [LARGE SCALE GENOMIC DNA]</scope>
    <source>
        <strain>PG-8A</strain>
    </source>
</reference>
<dbReference type="EMBL" id="CP000896">
    <property type="protein sequence ID" value="ABX80741.1"/>
    <property type="molecule type" value="Genomic_DNA"/>
</dbReference>
<dbReference type="SMR" id="A9NEG1"/>
<dbReference type="STRING" id="441768.ACL_0115"/>
<dbReference type="KEGG" id="acl:ACL_0115"/>
<dbReference type="eggNOG" id="COG0203">
    <property type="taxonomic scope" value="Bacteria"/>
</dbReference>
<dbReference type="HOGENOM" id="CLU_074407_2_2_14"/>
<dbReference type="OrthoDB" id="9809073at2"/>
<dbReference type="Proteomes" id="UP000008558">
    <property type="component" value="Chromosome"/>
</dbReference>
<dbReference type="GO" id="GO:0022625">
    <property type="term" value="C:cytosolic large ribosomal subunit"/>
    <property type="evidence" value="ECO:0007669"/>
    <property type="project" value="TreeGrafter"/>
</dbReference>
<dbReference type="GO" id="GO:0003735">
    <property type="term" value="F:structural constituent of ribosome"/>
    <property type="evidence" value="ECO:0007669"/>
    <property type="project" value="InterPro"/>
</dbReference>
<dbReference type="GO" id="GO:0006412">
    <property type="term" value="P:translation"/>
    <property type="evidence" value="ECO:0007669"/>
    <property type="project" value="UniProtKB-UniRule"/>
</dbReference>
<dbReference type="Gene3D" id="3.90.1030.10">
    <property type="entry name" value="Ribosomal protein L17"/>
    <property type="match status" value="1"/>
</dbReference>
<dbReference type="HAMAP" id="MF_01368">
    <property type="entry name" value="Ribosomal_bL17"/>
    <property type="match status" value="1"/>
</dbReference>
<dbReference type="InterPro" id="IPR000456">
    <property type="entry name" value="Ribosomal_bL17"/>
</dbReference>
<dbReference type="InterPro" id="IPR047859">
    <property type="entry name" value="Ribosomal_bL17_CS"/>
</dbReference>
<dbReference type="InterPro" id="IPR036373">
    <property type="entry name" value="Ribosomal_bL17_sf"/>
</dbReference>
<dbReference type="NCBIfam" id="TIGR00059">
    <property type="entry name" value="L17"/>
    <property type="match status" value="1"/>
</dbReference>
<dbReference type="PANTHER" id="PTHR14413:SF16">
    <property type="entry name" value="LARGE RIBOSOMAL SUBUNIT PROTEIN BL17M"/>
    <property type="match status" value="1"/>
</dbReference>
<dbReference type="PANTHER" id="PTHR14413">
    <property type="entry name" value="RIBOSOMAL PROTEIN L17"/>
    <property type="match status" value="1"/>
</dbReference>
<dbReference type="Pfam" id="PF01196">
    <property type="entry name" value="Ribosomal_L17"/>
    <property type="match status" value="1"/>
</dbReference>
<dbReference type="SUPFAM" id="SSF64263">
    <property type="entry name" value="Prokaryotic ribosomal protein L17"/>
    <property type="match status" value="1"/>
</dbReference>
<dbReference type="PROSITE" id="PS01167">
    <property type="entry name" value="RIBOSOMAL_L17"/>
    <property type="match status" value="1"/>
</dbReference>
<name>RL17_ACHLI</name>
<proteinExistence type="inferred from homology"/>